<protein>
    <recommendedName>
        <fullName evidence="1">Serine hydroxymethyltransferase</fullName>
        <shortName evidence="1">SHMT</shortName>
        <shortName evidence="1">Serine methylase</shortName>
        <ecNumber evidence="1">2.1.2.-</ecNumber>
    </recommendedName>
</protein>
<sequence>MDPVEAYGRVKSSILEHHKWFDSSLPMIASENVTSPAVRKAMTSDFGHRYAEGWVGERVYAGTKYIDEVESIAMELVKRLFNVKFADVRPISGVVANLAVYTAFTNPGDVAMALPITKGGHISMGPLRGSEGQFIGGTAGAVRGLDVKYLAFDDHNMNVDVDKSIKRIEENKPKLVILGGSVILFPHPVKELSDVCKSVGALLHYDAAHVAGLIAGKQFQQPMEEGADVMTMSTHKTFFGPQHGAVITNDEEKFERIKLANFPGLLSNHHLHSVAALALAAAEMLAFGEEYARAVVRNAKALAQALHDEGFSVVAEHLGFTQSHQVLLDVDALGGGHRCEKLLEEANIIVNRNLLPWDIKRGRSFKDPGGLRLGVSELTRLGMGEEEMKEIAKLYRKVLLDREDPKKVAGEVSELRKRFRNVKYAFEEGPAYEY</sequence>
<keyword id="KW-0028">Amino-acid biosynthesis</keyword>
<keyword id="KW-0963">Cytoplasm</keyword>
<keyword id="KW-0554">One-carbon metabolism</keyword>
<keyword id="KW-0663">Pyridoxal phosphate</keyword>
<keyword id="KW-1185">Reference proteome</keyword>
<keyword id="KW-0808">Transferase</keyword>
<comment type="function">
    <text evidence="1">Catalyzes the reversible interconversion of serine and glycine with a modified folate serving as the one-carbon carrier. Also exhibits a pteridine-independent aldolase activity toward beta-hydroxyamino acids, producing glycine and aldehydes, via a retro-aldol mechanism.</text>
</comment>
<comment type="cofactor">
    <cofactor evidence="1">
        <name>pyridoxal 5'-phosphate</name>
        <dbReference type="ChEBI" id="CHEBI:597326"/>
    </cofactor>
</comment>
<comment type="pathway">
    <text evidence="1">Amino-acid biosynthesis; glycine biosynthesis; glycine from L-serine: step 1/1.</text>
</comment>
<comment type="subunit">
    <text evidence="1">Homodimer.</text>
</comment>
<comment type="subcellular location">
    <subcellularLocation>
        <location evidence="1">Cytoplasm</location>
    </subcellularLocation>
</comment>
<comment type="similarity">
    <text evidence="1">Belongs to the SHMT family.</text>
</comment>
<organism>
    <name type="scientific">Korarchaeum cryptofilum (strain OPF8)</name>
    <dbReference type="NCBI Taxonomy" id="374847"/>
    <lineage>
        <taxon>Archaea</taxon>
        <taxon>Thermoproteota</taxon>
        <taxon>Candidatus Korarchaeia</taxon>
        <taxon>Candidatus Korarchaeales</taxon>
        <taxon>Candidatus Korarchaeaceae</taxon>
        <taxon>Candidatus Korarchaeum</taxon>
    </lineage>
</organism>
<evidence type="ECO:0000255" key="1">
    <source>
        <dbReference type="HAMAP-Rule" id="MF_00051"/>
    </source>
</evidence>
<reference key="1">
    <citation type="journal article" date="2008" name="Proc. Natl. Acad. Sci. U.S.A.">
        <title>A korarchaeal genome reveals new insights into the evolution of the Archaea.</title>
        <authorList>
            <person name="Elkins J.G."/>
            <person name="Podar M."/>
            <person name="Graham D.E."/>
            <person name="Makarova K.S."/>
            <person name="Wolf Y."/>
            <person name="Randau L."/>
            <person name="Hedlund B.P."/>
            <person name="Brochier-Armanet C."/>
            <person name="Kunin V."/>
            <person name="Anderson I."/>
            <person name="Lapidus A."/>
            <person name="Goltsman E."/>
            <person name="Barry K."/>
            <person name="Koonin E.V."/>
            <person name="Hugenholtz P."/>
            <person name="Kyrpides N."/>
            <person name="Wanner G."/>
            <person name="Richardson P."/>
            <person name="Keller M."/>
            <person name="Stetter K.O."/>
        </authorList>
    </citation>
    <scope>NUCLEOTIDE SEQUENCE [LARGE SCALE GENOMIC DNA]</scope>
    <source>
        <strain>OPF8</strain>
    </source>
</reference>
<accession>B1L5K9</accession>
<gene>
    <name evidence="1" type="primary">glyA</name>
    <name type="ordered locus">Kcr_0992</name>
</gene>
<dbReference type="EC" id="2.1.2.-" evidence="1"/>
<dbReference type="EMBL" id="CP000968">
    <property type="protein sequence ID" value="ACB07738.1"/>
    <property type="molecule type" value="Genomic_DNA"/>
</dbReference>
<dbReference type="RefSeq" id="WP_012309635.1">
    <property type="nucleotide sequence ID" value="NC_010482.1"/>
</dbReference>
<dbReference type="SMR" id="B1L5K9"/>
<dbReference type="FunCoup" id="B1L5K9">
    <property type="interactions" value="240"/>
</dbReference>
<dbReference type="STRING" id="374847.Kcr_0992"/>
<dbReference type="EnsemblBacteria" id="ACB07738">
    <property type="protein sequence ID" value="ACB07738"/>
    <property type="gene ID" value="Kcr_0992"/>
</dbReference>
<dbReference type="GeneID" id="6094269"/>
<dbReference type="KEGG" id="kcr:Kcr_0992"/>
<dbReference type="eggNOG" id="arCOG00070">
    <property type="taxonomic scope" value="Archaea"/>
</dbReference>
<dbReference type="HOGENOM" id="CLU_022477_2_1_2"/>
<dbReference type="InParanoid" id="B1L5K9"/>
<dbReference type="OrthoDB" id="5821at2157"/>
<dbReference type="PhylomeDB" id="B1L5K9"/>
<dbReference type="UniPathway" id="UPA00288">
    <property type="reaction ID" value="UER01023"/>
</dbReference>
<dbReference type="Proteomes" id="UP000001686">
    <property type="component" value="Chromosome"/>
</dbReference>
<dbReference type="GO" id="GO:0005737">
    <property type="term" value="C:cytoplasm"/>
    <property type="evidence" value="ECO:0000318"/>
    <property type="project" value="GO_Central"/>
</dbReference>
<dbReference type="GO" id="GO:0004372">
    <property type="term" value="F:glycine hydroxymethyltransferase activity"/>
    <property type="evidence" value="ECO:0000318"/>
    <property type="project" value="GO_Central"/>
</dbReference>
<dbReference type="GO" id="GO:0030170">
    <property type="term" value="F:pyridoxal phosphate binding"/>
    <property type="evidence" value="ECO:0000318"/>
    <property type="project" value="GO_Central"/>
</dbReference>
<dbReference type="GO" id="GO:0019264">
    <property type="term" value="P:glycine biosynthetic process from serine"/>
    <property type="evidence" value="ECO:0000318"/>
    <property type="project" value="GO_Central"/>
</dbReference>
<dbReference type="GO" id="GO:0035999">
    <property type="term" value="P:tetrahydrofolate interconversion"/>
    <property type="evidence" value="ECO:0007669"/>
    <property type="project" value="InterPro"/>
</dbReference>
<dbReference type="GO" id="GO:0046653">
    <property type="term" value="P:tetrahydrofolate metabolic process"/>
    <property type="evidence" value="ECO:0000318"/>
    <property type="project" value="GO_Central"/>
</dbReference>
<dbReference type="CDD" id="cd00378">
    <property type="entry name" value="SHMT"/>
    <property type="match status" value="1"/>
</dbReference>
<dbReference type="FunFam" id="3.40.640.10:FF:000101">
    <property type="entry name" value="Serine hydroxymethyltransferase"/>
    <property type="match status" value="1"/>
</dbReference>
<dbReference type="FunFam" id="3.90.1150.10:FF:000114">
    <property type="entry name" value="Serine hydroxymethyltransferase"/>
    <property type="match status" value="1"/>
</dbReference>
<dbReference type="Gene3D" id="3.90.1150.10">
    <property type="entry name" value="Aspartate Aminotransferase, domain 1"/>
    <property type="match status" value="1"/>
</dbReference>
<dbReference type="Gene3D" id="3.40.640.10">
    <property type="entry name" value="Type I PLP-dependent aspartate aminotransferase-like (Major domain)"/>
    <property type="match status" value="1"/>
</dbReference>
<dbReference type="HAMAP" id="MF_00051">
    <property type="entry name" value="SHMT"/>
    <property type="match status" value="1"/>
</dbReference>
<dbReference type="InterPro" id="IPR015424">
    <property type="entry name" value="PyrdxlP-dep_Trfase"/>
</dbReference>
<dbReference type="InterPro" id="IPR015421">
    <property type="entry name" value="PyrdxlP-dep_Trfase_major"/>
</dbReference>
<dbReference type="InterPro" id="IPR015422">
    <property type="entry name" value="PyrdxlP-dep_Trfase_small"/>
</dbReference>
<dbReference type="InterPro" id="IPR001085">
    <property type="entry name" value="Ser_HO-MeTrfase"/>
</dbReference>
<dbReference type="InterPro" id="IPR049943">
    <property type="entry name" value="Ser_HO-MeTrfase-like"/>
</dbReference>
<dbReference type="InterPro" id="IPR039429">
    <property type="entry name" value="SHMT-like_dom"/>
</dbReference>
<dbReference type="NCBIfam" id="NF000586">
    <property type="entry name" value="PRK00011.1"/>
    <property type="match status" value="1"/>
</dbReference>
<dbReference type="PANTHER" id="PTHR11680">
    <property type="entry name" value="SERINE HYDROXYMETHYLTRANSFERASE"/>
    <property type="match status" value="1"/>
</dbReference>
<dbReference type="PANTHER" id="PTHR11680:SF35">
    <property type="entry name" value="SERINE HYDROXYMETHYLTRANSFERASE 1"/>
    <property type="match status" value="1"/>
</dbReference>
<dbReference type="Pfam" id="PF00464">
    <property type="entry name" value="SHMT"/>
    <property type="match status" value="1"/>
</dbReference>
<dbReference type="PIRSF" id="PIRSF000412">
    <property type="entry name" value="SHMT"/>
    <property type="match status" value="1"/>
</dbReference>
<dbReference type="SUPFAM" id="SSF53383">
    <property type="entry name" value="PLP-dependent transferases"/>
    <property type="match status" value="1"/>
</dbReference>
<name>GLYA_KORCO</name>
<feature type="chain" id="PRO_0000369968" description="Serine hydroxymethyltransferase">
    <location>
        <begin position="1"/>
        <end position="434"/>
    </location>
</feature>
<feature type="binding site" evidence="1">
    <location>
        <begin position="120"/>
        <end position="122"/>
    </location>
    <ligand>
        <name>(6S)-5,6,7,8-tetrahydrofolate</name>
        <dbReference type="ChEBI" id="CHEBI:57453"/>
    </ligand>
</feature>
<feature type="binding site" evidence="1">
    <location>
        <position position="255"/>
    </location>
    <ligand>
        <name>(6S)-5,6,7,8-tetrahydrofolate</name>
        <dbReference type="ChEBI" id="CHEBI:57453"/>
    </ligand>
</feature>
<feature type="site" description="Plays an important role in substrate specificity" evidence="1">
    <location>
        <position position="235"/>
    </location>
</feature>
<feature type="modified residue" description="N6-(pyridoxal phosphate)lysine" evidence="1">
    <location>
        <position position="236"/>
    </location>
</feature>
<proteinExistence type="inferred from homology"/>